<evidence type="ECO:0000255" key="1">
    <source>
        <dbReference type="HAMAP-Rule" id="MF_01347"/>
    </source>
</evidence>
<evidence type="ECO:0000305" key="2"/>
<organism>
    <name type="scientific">Coxiella burnetii (strain Dugway 5J108-111)</name>
    <dbReference type="NCBI Taxonomy" id="434922"/>
    <lineage>
        <taxon>Bacteria</taxon>
        <taxon>Pseudomonadati</taxon>
        <taxon>Pseudomonadota</taxon>
        <taxon>Gammaproteobacteria</taxon>
        <taxon>Legionellales</taxon>
        <taxon>Coxiellaceae</taxon>
        <taxon>Coxiella</taxon>
    </lineage>
</organism>
<sequence>MTTAKSGTTIEIIGAVVDVEFPRHAVPKVYDALQVDENNLTLEVQQQLGDGVVRTIAMGSTEGLKRDIAVKNTEKPIEVPVGKETLGRIMNVLGEPIDELGPINSKEKLPIHRPAPSFIEQSGATELLETGIKVVDLLCPFAKGGKVGLFGGAGVGKTVNMMELIRNIAIEHSGYSVFAGVGERTREGNDFYHEMKESNVLDKVALVYGQMNEPPGNRLRVGLTGLTLAEAFRDEGRDVLLFIDNIFRYTLAGVEVSALLGRMPSAVGYQPTLAEEMGALQERITSTKKGSITSIQAVYVPADDLTDPSPATTFAHLDATVVLSRQIAERGIYPAIDPLDSTSRQLDPLIIGEEHYRVARGVQETLQRYEELKDIIAILGMDELSEDDKRAVRRARKIQRFLSQPFFVAEVFTGAPGKYVSLQDTIRGFKGIINGEYDELPEQAFYMVGSIEEAVEKAKSL</sequence>
<keyword id="KW-0066">ATP synthesis</keyword>
<keyword id="KW-0067">ATP-binding</keyword>
<keyword id="KW-0997">Cell inner membrane</keyword>
<keyword id="KW-1003">Cell membrane</keyword>
<keyword id="KW-0139">CF(1)</keyword>
<keyword id="KW-0375">Hydrogen ion transport</keyword>
<keyword id="KW-0406">Ion transport</keyword>
<keyword id="KW-0472">Membrane</keyword>
<keyword id="KW-0547">Nucleotide-binding</keyword>
<keyword id="KW-1278">Translocase</keyword>
<keyword id="KW-0813">Transport</keyword>
<comment type="function">
    <text evidence="1">Produces ATP from ADP in the presence of a proton gradient across the membrane. The catalytic sites are hosted primarily by the beta subunits.</text>
</comment>
<comment type="catalytic activity">
    <reaction evidence="1">
        <text>ATP + H2O + 4 H(+)(in) = ADP + phosphate + 5 H(+)(out)</text>
        <dbReference type="Rhea" id="RHEA:57720"/>
        <dbReference type="ChEBI" id="CHEBI:15377"/>
        <dbReference type="ChEBI" id="CHEBI:15378"/>
        <dbReference type="ChEBI" id="CHEBI:30616"/>
        <dbReference type="ChEBI" id="CHEBI:43474"/>
        <dbReference type="ChEBI" id="CHEBI:456216"/>
        <dbReference type="EC" id="7.1.2.2"/>
    </reaction>
</comment>
<comment type="subunit">
    <text evidence="1">F-type ATPases have 2 components, CF(1) - the catalytic core - and CF(0) - the membrane proton channel. CF(1) has five subunits: alpha(3), beta(3), gamma(1), delta(1), epsilon(1). CF(0) has three main subunits: a(1), b(2) and c(9-12). The alpha and beta chains form an alternating ring which encloses part of the gamma chain. CF(1) is attached to CF(0) by a central stalk formed by the gamma and epsilon chains, while a peripheral stalk is formed by the delta and b chains.</text>
</comment>
<comment type="subcellular location">
    <subcellularLocation>
        <location evidence="1">Cell inner membrane</location>
        <topology evidence="1">Peripheral membrane protein</topology>
    </subcellularLocation>
</comment>
<comment type="similarity">
    <text evidence="1">Belongs to the ATPase alpha/beta chains family.</text>
</comment>
<comment type="sequence caution" evidence="2">
    <conflict type="erroneous initiation">
        <sequence resource="EMBL-CDS" id="ABS77940"/>
    </conflict>
</comment>
<accession>A9KBF7</accession>
<protein>
    <recommendedName>
        <fullName evidence="1">ATP synthase subunit beta</fullName>
        <ecNumber evidence="1">7.1.2.2</ecNumber>
    </recommendedName>
    <alternativeName>
        <fullName evidence="1">ATP synthase F1 sector subunit beta</fullName>
    </alternativeName>
    <alternativeName>
        <fullName evidence="1">F-ATPase subunit beta</fullName>
    </alternativeName>
</protein>
<gene>
    <name evidence="1" type="primary">atpD</name>
    <name type="ordered locus">CBUD_0176</name>
</gene>
<proteinExistence type="inferred from homology"/>
<reference key="1">
    <citation type="journal article" date="2009" name="Infect. Immun.">
        <title>Comparative genomics reveal extensive transposon-mediated genomic plasticity and diversity among potential effector proteins within the genus Coxiella.</title>
        <authorList>
            <person name="Beare P.A."/>
            <person name="Unsworth N."/>
            <person name="Andoh M."/>
            <person name="Voth D.E."/>
            <person name="Omsland A."/>
            <person name="Gilk S.D."/>
            <person name="Williams K.P."/>
            <person name="Sobral B.W."/>
            <person name="Kupko J.J. III"/>
            <person name="Porcella S.F."/>
            <person name="Samuel J.E."/>
            <person name="Heinzen R.A."/>
        </authorList>
    </citation>
    <scope>NUCLEOTIDE SEQUENCE [LARGE SCALE GENOMIC DNA]</scope>
    <source>
        <strain>Dugway 5J108-111</strain>
    </source>
</reference>
<dbReference type="EC" id="7.1.2.2" evidence="1"/>
<dbReference type="EMBL" id="CP000733">
    <property type="protein sequence ID" value="ABS77940.2"/>
    <property type="status" value="ALT_INIT"/>
    <property type="molecule type" value="Genomic_DNA"/>
</dbReference>
<dbReference type="SMR" id="A9KBF7"/>
<dbReference type="KEGG" id="cbd:CBUD_0176"/>
<dbReference type="HOGENOM" id="CLU_022398_0_2_6"/>
<dbReference type="Proteomes" id="UP000008555">
    <property type="component" value="Chromosome"/>
</dbReference>
<dbReference type="GO" id="GO:0005886">
    <property type="term" value="C:plasma membrane"/>
    <property type="evidence" value="ECO:0007669"/>
    <property type="project" value="UniProtKB-SubCell"/>
</dbReference>
<dbReference type="GO" id="GO:0045259">
    <property type="term" value="C:proton-transporting ATP synthase complex"/>
    <property type="evidence" value="ECO:0007669"/>
    <property type="project" value="UniProtKB-KW"/>
</dbReference>
<dbReference type="GO" id="GO:0005524">
    <property type="term" value="F:ATP binding"/>
    <property type="evidence" value="ECO:0007669"/>
    <property type="project" value="UniProtKB-UniRule"/>
</dbReference>
<dbReference type="GO" id="GO:0016887">
    <property type="term" value="F:ATP hydrolysis activity"/>
    <property type="evidence" value="ECO:0007669"/>
    <property type="project" value="InterPro"/>
</dbReference>
<dbReference type="GO" id="GO:0046933">
    <property type="term" value="F:proton-transporting ATP synthase activity, rotational mechanism"/>
    <property type="evidence" value="ECO:0007669"/>
    <property type="project" value="UniProtKB-UniRule"/>
</dbReference>
<dbReference type="CDD" id="cd18110">
    <property type="entry name" value="ATP-synt_F1_beta_C"/>
    <property type="match status" value="1"/>
</dbReference>
<dbReference type="CDD" id="cd18115">
    <property type="entry name" value="ATP-synt_F1_beta_N"/>
    <property type="match status" value="1"/>
</dbReference>
<dbReference type="CDD" id="cd01133">
    <property type="entry name" value="F1-ATPase_beta_CD"/>
    <property type="match status" value="1"/>
</dbReference>
<dbReference type="FunFam" id="1.10.1140.10:FF:000001">
    <property type="entry name" value="ATP synthase subunit beta"/>
    <property type="match status" value="1"/>
</dbReference>
<dbReference type="FunFam" id="3.40.50.300:FF:000004">
    <property type="entry name" value="ATP synthase subunit beta"/>
    <property type="match status" value="1"/>
</dbReference>
<dbReference type="Gene3D" id="2.40.10.170">
    <property type="match status" value="1"/>
</dbReference>
<dbReference type="Gene3D" id="1.10.1140.10">
    <property type="entry name" value="Bovine Mitochondrial F1-atpase, Atp Synthase Beta Chain, Chain D, domain 3"/>
    <property type="match status" value="1"/>
</dbReference>
<dbReference type="Gene3D" id="3.40.50.300">
    <property type="entry name" value="P-loop containing nucleotide triphosphate hydrolases"/>
    <property type="match status" value="1"/>
</dbReference>
<dbReference type="HAMAP" id="MF_01347">
    <property type="entry name" value="ATP_synth_beta_bact"/>
    <property type="match status" value="1"/>
</dbReference>
<dbReference type="InterPro" id="IPR003593">
    <property type="entry name" value="AAA+_ATPase"/>
</dbReference>
<dbReference type="InterPro" id="IPR055190">
    <property type="entry name" value="ATP-synt_VA_C"/>
</dbReference>
<dbReference type="InterPro" id="IPR005722">
    <property type="entry name" value="ATP_synth_F1_bsu"/>
</dbReference>
<dbReference type="InterPro" id="IPR020003">
    <property type="entry name" value="ATPase_a/bsu_AS"/>
</dbReference>
<dbReference type="InterPro" id="IPR050053">
    <property type="entry name" value="ATPase_alpha/beta_chains"/>
</dbReference>
<dbReference type="InterPro" id="IPR004100">
    <property type="entry name" value="ATPase_F1/V1/A1_a/bsu_N"/>
</dbReference>
<dbReference type="InterPro" id="IPR036121">
    <property type="entry name" value="ATPase_F1/V1/A1_a/bsu_N_sf"/>
</dbReference>
<dbReference type="InterPro" id="IPR000194">
    <property type="entry name" value="ATPase_F1/V1/A1_a/bsu_nucl-bd"/>
</dbReference>
<dbReference type="InterPro" id="IPR024034">
    <property type="entry name" value="ATPase_F1/V1_b/a_C"/>
</dbReference>
<dbReference type="InterPro" id="IPR027417">
    <property type="entry name" value="P-loop_NTPase"/>
</dbReference>
<dbReference type="NCBIfam" id="TIGR01039">
    <property type="entry name" value="atpD"/>
    <property type="match status" value="1"/>
</dbReference>
<dbReference type="PANTHER" id="PTHR15184">
    <property type="entry name" value="ATP SYNTHASE"/>
    <property type="match status" value="1"/>
</dbReference>
<dbReference type="PANTHER" id="PTHR15184:SF71">
    <property type="entry name" value="ATP SYNTHASE SUBUNIT BETA, MITOCHONDRIAL"/>
    <property type="match status" value="1"/>
</dbReference>
<dbReference type="Pfam" id="PF00006">
    <property type="entry name" value="ATP-synt_ab"/>
    <property type="match status" value="1"/>
</dbReference>
<dbReference type="Pfam" id="PF02874">
    <property type="entry name" value="ATP-synt_ab_N"/>
    <property type="match status" value="1"/>
</dbReference>
<dbReference type="Pfam" id="PF22919">
    <property type="entry name" value="ATP-synt_VA_C"/>
    <property type="match status" value="1"/>
</dbReference>
<dbReference type="SMART" id="SM00382">
    <property type="entry name" value="AAA"/>
    <property type="match status" value="1"/>
</dbReference>
<dbReference type="SUPFAM" id="SSF47917">
    <property type="entry name" value="C-terminal domain of alpha and beta subunits of F1 ATP synthase"/>
    <property type="match status" value="1"/>
</dbReference>
<dbReference type="SUPFAM" id="SSF50615">
    <property type="entry name" value="N-terminal domain of alpha and beta subunits of F1 ATP synthase"/>
    <property type="match status" value="1"/>
</dbReference>
<dbReference type="SUPFAM" id="SSF52540">
    <property type="entry name" value="P-loop containing nucleoside triphosphate hydrolases"/>
    <property type="match status" value="1"/>
</dbReference>
<dbReference type="PROSITE" id="PS00152">
    <property type="entry name" value="ATPASE_ALPHA_BETA"/>
    <property type="match status" value="1"/>
</dbReference>
<name>ATPB_COXBN</name>
<feature type="chain" id="PRO_1000086907" description="ATP synthase subunit beta">
    <location>
        <begin position="1"/>
        <end position="461"/>
    </location>
</feature>
<feature type="binding site" evidence="1">
    <location>
        <begin position="151"/>
        <end position="158"/>
    </location>
    <ligand>
        <name>ATP</name>
        <dbReference type="ChEBI" id="CHEBI:30616"/>
    </ligand>
</feature>